<protein>
    <recommendedName>
        <fullName evidence="1">Protein-L-isoaspartate O-methyltransferase</fullName>
        <ecNumber evidence="1">2.1.1.77</ecNumber>
    </recommendedName>
    <alternativeName>
        <fullName evidence="1">L-isoaspartyl protein carboxyl methyltransferase</fullName>
    </alternativeName>
    <alternativeName>
        <fullName evidence="1">Protein L-isoaspartyl methyltransferase</fullName>
    </alternativeName>
    <alternativeName>
        <fullName evidence="1">Protein-beta-aspartate methyltransferase</fullName>
        <shortName evidence="1">PIMT</shortName>
    </alternativeName>
</protein>
<gene>
    <name evidence="1" type="primary">pcm</name>
    <name type="ordered locus">azo1088</name>
</gene>
<proteinExistence type="inferred from homology"/>
<name>PIMT_AZOSB</name>
<evidence type="ECO:0000255" key="1">
    <source>
        <dbReference type="HAMAP-Rule" id="MF_00090"/>
    </source>
</evidence>
<evidence type="ECO:0000305" key="2"/>
<sequence length="217" mass="23331">MSGRQDASHAGRARARMVERLRAQGIQDEGALAAMMQVPRHLFVEEGLAYSAYDDTALPIGFQQTISQPYVVARMIELLRSGGRQLGRVLEIGAGCGYQAAVLSTLATEVYAVERIRPLLDKARANLRPLRLPNVRLKHADGTLGLPEAAPFESIIVAAAAGGVPNALKEQLAPGGRLIIPVGGGEQRLLLIERQGNVFRESGYEAVRFVPLLAGTE</sequence>
<dbReference type="EC" id="2.1.1.77" evidence="1"/>
<dbReference type="EMBL" id="AM406670">
    <property type="protein sequence ID" value="CAL93705.1"/>
    <property type="status" value="ALT_INIT"/>
    <property type="molecule type" value="Genomic_DNA"/>
</dbReference>
<dbReference type="RefSeq" id="WP_083831910.1">
    <property type="nucleotide sequence ID" value="NC_008702.1"/>
</dbReference>
<dbReference type="SMR" id="A1K4F0"/>
<dbReference type="STRING" id="62928.azo1088"/>
<dbReference type="KEGG" id="aoa:dqs_1198"/>
<dbReference type="KEGG" id="azo:azo1088"/>
<dbReference type="eggNOG" id="COG2518">
    <property type="taxonomic scope" value="Bacteria"/>
</dbReference>
<dbReference type="HOGENOM" id="CLU_055432_2_0_4"/>
<dbReference type="OrthoDB" id="9810066at2"/>
<dbReference type="Proteomes" id="UP000002588">
    <property type="component" value="Chromosome"/>
</dbReference>
<dbReference type="GO" id="GO:0005737">
    <property type="term" value="C:cytoplasm"/>
    <property type="evidence" value="ECO:0007669"/>
    <property type="project" value="UniProtKB-SubCell"/>
</dbReference>
<dbReference type="GO" id="GO:0004719">
    <property type="term" value="F:protein-L-isoaspartate (D-aspartate) O-methyltransferase activity"/>
    <property type="evidence" value="ECO:0007669"/>
    <property type="project" value="UniProtKB-UniRule"/>
</dbReference>
<dbReference type="GO" id="GO:0032259">
    <property type="term" value="P:methylation"/>
    <property type="evidence" value="ECO:0007669"/>
    <property type="project" value="UniProtKB-KW"/>
</dbReference>
<dbReference type="GO" id="GO:0036211">
    <property type="term" value="P:protein modification process"/>
    <property type="evidence" value="ECO:0007669"/>
    <property type="project" value="UniProtKB-UniRule"/>
</dbReference>
<dbReference type="GO" id="GO:0030091">
    <property type="term" value="P:protein repair"/>
    <property type="evidence" value="ECO:0007669"/>
    <property type="project" value="UniProtKB-UniRule"/>
</dbReference>
<dbReference type="CDD" id="cd02440">
    <property type="entry name" value="AdoMet_MTases"/>
    <property type="match status" value="1"/>
</dbReference>
<dbReference type="FunFam" id="3.40.50.150:FF:000010">
    <property type="entry name" value="Protein-L-isoaspartate O-methyltransferase"/>
    <property type="match status" value="1"/>
</dbReference>
<dbReference type="Gene3D" id="3.40.50.150">
    <property type="entry name" value="Vaccinia Virus protein VP39"/>
    <property type="match status" value="1"/>
</dbReference>
<dbReference type="HAMAP" id="MF_00090">
    <property type="entry name" value="PIMT"/>
    <property type="match status" value="1"/>
</dbReference>
<dbReference type="InterPro" id="IPR000682">
    <property type="entry name" value="PCMT"/>
</dbReference>
<dbReference type="InterPro" id="IPR029063">
    <property type="entry name" value="SAM-dependent_MTases_sf"/>
</dbReference>
<dbReference type="NCBIfam" id="TIGR00080">
    <property type="entry name" value="pimt"/>
    <property type="match status" value="1"/>
</dbReference>
<dbReference type="NCBIfam" id="NF001453">
    <property type="entry name" value="PRK00312.1"/>
    <property type="match status" value="1"/>
</dbReference>
<dbReference type="PANTHER" id="PTHR11579">
    <property type="entry name" value="PROTEIN-L-ISOASPARTATE O-METHYLTRANSFERASE"/>
    <property type="match status" value="1"/>
</dbReference>
<dbReference type="PANTHER" id="PTHR11579:SF0">
    <property type="entry name" value="PROTEIN-L-ISOASPARTATE(D-ASPARTATE) O-METHYLTRANSFERASE"/>
    <property type="match status" value="1"/>
</dbReference>
<dbReference type="Pfam" id="PF01135">
    <property type="entry name" value="PCMT"/>
    <property type="match status" value="1"/>
</dbReference>
<dbReference type="SUPFAM" id="SSF53335">
    <property type="entry name" value="S-adenosyl-L-methionine-dependent methyltransferases"/>
    <property type="match status" value="1"/>
</dbReference>
<dbReference type="PROSITE" id="PS01279">
    <property type="entry name" value="PCMT"/>
    <property type="match status" value="1"/>
</dbReference>
<accession>A1K4F0</accession>
<comment type="function">
    <text evidence="1">Catalyzes the methyl esterification of L-isoaspartyl residues in peptides and proteins that result from spontaneous decomposition of normal L-aspartyl and L-asparaginyl residues. It plays a role in the repair and/or degradation of damaged proteins.</text>
</comment>
<comment type="catalytic activity">
    <reaction evidence="1">
        <text>[protein]-L-isoaspartate + S-adenosyl-L-methionine = [protein]-L-isoaspartate alpha-methyl ester + S-adenosyl-L-homocysteine</text>
        <dbReference type="Rhea" id="RHEA:12705"/>
        <dbReference type="Rhea" id="RHEA-COMP:12143"/>
        <dbReference type="Rhea" id="RHEA-COMP:12144"/>
        <dbReference type="ChEBI" id="CHEBI:57856"/>
        <dbReference type="ChEBI" id="CHEBI:59789"/>
        <dbReference type="ChEBI" id="CHEBI:90596"/>
        <dbReference type="ChEBI" id="CHEBI:90598"/>
        <dbReference type="EC" id="2.1.1.77"/>
    </reaction>
</comment>
<comment type="subcellular location">
    <subcellularLocation>
        <location evidence="1">Cytoplasm</location>
    </subcellularLocation>
</comment>
<comment type="similarity">
    <text evidence="1">Belongs to the methyltransferase superfamily. L-isoaspartyl/D-aspartyl protein methyltransferase family.</text>
</comment>
<comment type="sequence caution" evidence="2">
    <conflict type="erroneous initiation">
        <sequence resource="EMBL-CDS" id="CAL93705"/>
    </conflict>
</comment>
<organism>
    <name type="scientific">Azoarcus sp. (strain BH72)</name>
    <dbReference type="NCBI Taxonomy" id="418699"/>
    <lineage>
        <taxon>Bacteria</taxon>
        <taxon>Pseudomonadati</taxon>
        <taxon>Pseudomonadota</taxon>
        <taxon>Betaproteobacteria</taxon>
        <taxon>Rhodocyclales</taxon>
        <taxon>Zoogloeaceae</taxon>
        <taxon>Azoarcus</taxon>
    </lineage>
</organism>
<reference key="1">
    <citation type="journal article" date="2006" name="Nat. Biotechnol.">
        <title>Complete genome of the mutualistic, N2-fixing grass endophyte Azoarcus sp. strain BH72.</title>
        <authorList>
            <person name="Krause A."/>
            <person name="Ramakumar A."/>
            <person name="Bartels D."/>
            <person name="Battistoni F."/>
            <person name="Bekel T."/>
            <person name="Boch J."/>
            <person name="Boehm M."/>
            <person name="Friedrich F."/>
            <person name="Hurek T."/>
            <person name="Krause L."/>
            <person name="Linke B."/>
            <person name="McHardy A.C."/>
            <person name="Sarkar A."/>
            <person name="Schneiker S."/>
            <person name="Syed A.A."/>
            <person name="Thauer R."/>
            <person name="Vorhoelter F.-J."/>
            <person name="Weidner S."/>
            <person name="Puehler A."/>
            <person name="Reinhold-Hurek B."/>
            <person name="Kaiser O."/>
            <person name="Goesmann A."/>
        </authorList>
    </citation>
    <scope>NUCLEOTIDE SEQUENCE [LARGE SCALE GENOMIC DNA]</scope>
    <source>
        <strain>BH72</strain>
    </source>
</reference>
<feature type="chain" id="PRO_0000351815" description="Protein-L-isoaspartate O-methyltransferase">
    <location>
        <begin position="1"/>
        <end position="217"/>
    </location>
</feature>
<feature type="active site" evidence="1">
    <location>
        <position position="67"/>
    </location>
</feature>
<keyword id="KW-0963">Cytoplasm</keyword>
<keyword id="KW-0489">Methyltransferase</keyword>
<keyword id="KW-1185">Reference proteome</keyword>
<keyword id="KW-0949">S-adenosyl-L-methionine</keyword>
<keyword id="KW-0808">Transferase</keyword>